<feature type="chain" id="PRO_0000200025" description="Exodeoxyribonuclease">
    <location>
        <begin position="1"/>
        <end position="252"/>
    </location>
</feature>
<feature type="active site" evidence="1">
    <location>
        <position position="106"/>
    </location>
</feature>
<feature type="active site" description="Proton donor/acceptor" evidence="1">
    <location>
        <position position="145"/>
    </location>
</feature>
<feature type="binding site" evidence="1">
    <location>
        <position position="36"/>
    </location>
    <ligand>
        <name>Mg(2+)</name>
        <dbReference type="ChEBI" id="CHEBI:18420"/>
        <label>1</label>
    </ligand>
</feature>
<feature type="binding site" evidence="1">
    <location>
        <position position="145"/>
    </location>
    <ligand>
        <name>Mg(2+)</name>
        <dbReference type="ChEBI" id="CHEBI:18420"/>
        <label>2</label>
    </ligand>
</feature>
<feature type="binding site" evidence="1">
    <location>
        <position position="147"/>
    </location>
    <ligand>
        <name>Mg(2+)</name>
        <dbReference type="ChEBI" id="CHEBI:18420"/>
        <label>2</label>
    </ligand>
</feature>
<feature type="binding site" evidence="1">
    <location>
        <position position="242"/>
    </location>
    <ligand>
        <name>Mg(2+)</name>
        <dbReference type="ChEBI" id="CHEBI:18420"/>
        <label>1</label>
    </ligand>
</feature>
<feature type="site" description="Transition state stabilizer" evidence="1">
    <location>
        <position position="147"/>
    </location>
</feature>
<feature type="site" description="Important for catalytic activity" evidence="1">
    <location>
        <position position="217"/>
    </location>
</feature>
<feature type="site" description="Interaction with DNA substrate" evidence="1">
    <location>
        <position position="243"/>
    </location>
</feature>
<feature type="strand" evidence="3">
    <location>
        <begin position="2"/>
        <end position="7"/>
    </location>
</feature>
<feature type="helix" evidence="3">
    <location>
        <begin position="11"/>
        <end position="17"/>
    </location>
</feature>
<feature type="helix" evidence="3">
    <location>
        <begin position="20"/>
        <end position="27"/>
    </location>
</feature>
<feature type="strand" evidence="3">
    <location>
        <begin position="30"/>
        <end position="35"/>
    </location>
</feature>
<feature type="strand" evidence="3">
    <location>
        <begin position="41"/>
        <end position="44"/>
    </location>
</feature>
<feature type="strand" evidence="3">
    <location>
        <begin position="52"/>
        <end position="56"/>
    </location>
</feature>
<feature type="strand" evidence="3">
    <location>
        <begin position="58"/>
        <end position="60"/>
    </location>
</feature>
<feature type="strand" evidence="3">
    <location>
        <begin position="66"/>
        <end position="72"/>
    </location>
</feature>
<feature type="strand" evidence="3">
    <location>
        <begin position="75"/>
        <end position="80"/>
    </location>
</feature>
<feature type="helix" evidence="3">
    <location>
        <begin position="84"/>
        <end position="86"/>
    </location>
</feature>
<feature type="strand" evidence="3">
    <location>
        <begin position="87"/>
        <end position="89"/>
    </location>
</feature>
<feature type="strand" evidence="3">
    <location>
        <begin position="92"/>
        <end position="96"/>
    </location>
</feature>
<feature type="strand" evidence="3">
    <location>
        <begin position="101"/>
        <end position="106"/>
    </location>
</feature>
<feature type="helix" evidence="3">
    <location>
        <begin position="112"/>
        <end position="114"/>
    </location>
</feature>
<feature type="helix" evidence="3">
    <location>
        <begin position="117"/>
        <end position="137"/>
    </location>
</feature>
<feature type="strand" evidence="3">
    <location>
        <begin position="140"/>
        <end position="145"/>
    </location>
</feature>
<feature type="helix" evidence="3">
    <location>
        <begin position="152"/>
        <end position="154"/>
    </location>
</feature>
<feature type="helix" evidence="3">
    <location>
        <begin position="158"/>
        <end position="160"/>
    </location>
</feature>
<feature type="helix" evidence="3">
    <location>
        <begin position="169"/>
        <end position="180"/>
    </location>
</feature>
<feature type="strand" evidence="3">
    <location>
        <begin position="183"/>
        <end position="185"/>
    </location>
</feature>
<feature type="helix" evidence="3">
    <location>
        <begin position="186"/>
        <end position="190"/>
    </location>
</feature>
<feature type="strand" evidence="3">
    <location>
        <begin position="199"/>
        <end position="201"/>
    </location>
</feature>
<feature type="turn" evidence="3">
    <location>
        <begin position="205"/>
        <end position="211"/>
    </location>
</feature>
<feature type="strand" evidence="3">
    <location>
        <begin position="217"/>
        <end position="222"/>
    </location>
</feature>
<feature type="helix" evidence="3">
    <location>
        <begin position="223"/>
        <end position="228"/>
    </location>
</feature>
<feature type="strand" evidence="3">
    <location>
        <begin position="229"/>
        <end position="234"/>
    </location>
</feature>
<feature type="strand" evidence="3">
    <location>
        <begin position="240"/>
        <end position="243"/>
    </location>
</feature>
<feature type="strand" evidence="3">
    <location>
        <begin position="246"/>
        <end position="250"/>
    </location>
</feature>
<dbReference type="EC" id="3.1.11.2"/>
<dbReference type="EMBL" id="D26185">
    <property type="protein sequence ID" value="BAA05218.1"/>
    <property type="molecule type" value="Genomic_DNA"/>
</dbReference>
<dbReference type="EMBL" id="AL009126">
    <property type="protein sequence ID" value="CAB16125.1"/>
    <property type="molecule type" value="Genomic_DNA"/>
</dbReference>
<dbReference type="PIR" id="S66012">
    <property type="entry name" value="S66012"/>
</dbReference>
<dbReference type="RefSeq" id="NP_391968.1">
    <property type="nucleotide sequence ID" value="NC_000964.3"/>
</dbReference>
<dbReference type="PDB" id="5CFE">
    <property type="method" value="X-ray"/>
    <property type="resolution" value="1.84 A"/>
    <property type="chains" value="A=1-252"/>
</dbReference>
<dbReference type="PDBsum" id="5CFE"/>
<dbReference type="SMR" id="P37454"/>
<dbReference type="FunCoup" id="P37454">
    <property type="interactions" value="721"/>
</dbReference>
<dbReference type="STRING" id="224308.BSU40880"/>
<dbReference type="PaxDb" id="224308-BSU40880"/>
<dbReference type="EnsemblBacteria" id="CAB16125">
    <property type="protein sequence ID" value="CAB16125"/>
    <property type="gene ID" value="BSU_40880"/>
</dbReference>
<dbReference type="GeneID" id="937918"/>
<dbReference type="KEGG" id="bsu:BSU40880"/>
<dbReference type="PATRIC" id="fig|224308.179.peg.4429"/>
<dbReference type="eggNOG" id="COG0708">
    <property type="taxonomic scope" value="Bacteria"/>
</dbReference>
<dbReference type="InParanoid" id="P37454"/>
<dbReference type="OrthoDB" id="9803914at2"/>
<dbReference type="PhylomeDB" id="P37454"/>
<dbReference type="BioCyc" id="BSUB:BSU40880-MONOMER"/>
<dbReference type="BRENDA" id="3.1.11.1">
    <property type="organism ID" value="658"/>
</dbReference>
<dbReference type="Proteomes" id="UP000001570">
    <property type="component" value="Chromosome"/>
</dbReference>
<dbReference type="GO" id="GO:0005737">
    <property type="term" value="C:cytoplasm"/>
    <property type="evidence" value="ECO:0007669"/>
    <property type="project" value="UniProtKB-SubCell"/>
</dbReference>
<dbReference type="GO" id="GO:0003677">
    <property type="term" value="F:DNA binding"/>
    <property type="evidence" value="ECO:0007669"/>
    <property type="project" value="InterPro"/>
</dbReference>
<dbReference type="GO" id="GO:0003906">
    <property type="term" value="F:DNA-(apurinic or apyrimidinic site) endonuclease activity"/>
    <property type="evidence" value="ECO:0000318"/>
    <property type="project" value="GO_Central"/>
</dbReference>
<dbReference type="GO" id="GO:0008311">
    <property type="term" value="F:double-stranded DNA 3'-5' DNA exonuclease activity"/>
    <property type="evidence" value="ECO:0000318"/>
    <property type="project" value="GO_Central"/>
</dbReference>
<dbReference type="GO" id="GO:0004519">
    <property type="term" value="F:endonuclease activity"/>
    <property type="evidence" value="ECO:0007669"/>
    <property type="project" value="InterPro"/>
</dbReference>
<dbReference type="GO" id="GO:0046872">
    <property type="term" value="F:metal ion binding"/>
    <property type="evidence" value="ECO:0007669"/>
    <property type="project" value="UniProtKB-KW"/>
</dbReference>
<dbReference type="GO" id="GO:0008081">
    <property type="term" value="F:phosphoric diester hydrolase activity"/>
    <property type="evidence" value="ECO:0000318"/>
    <property type="project" value="GO_Central"/>
</dbReference>
<dbReference type="GO" id="GO:0006284">
    <property type="term" value="P:base-excision repair"/>
    <property type="evidence" value="ECO:0000318"/>
    <property type="project" value="GO_Central"/>
</dbReference>
<dbReference type="CDD" id="cd09087">
    <property type="entry name" value="Ape1-like_AP-endo"/>
    <property type="match status" value="1"/>
</dbReference>
<dbReference type="FunFam" id="3.60.10.10:FF:000034">
    <property type="entry name" value="Exodeoxyribonuclease III"/>
    <property type="match status" value="1"/>
</dbReference>
<dbReference type="Gene3D" id="3.60.10.10">
    <property type="entry name" value="Endonuclease/exonuclease/phosphatase"/>
    <property type="match status" value="1"/>
</dbReference>
<dbReference type="InterPro" id="IPR004808">
    <property type="entry name" value="AP_endonuc_1"/>
</dbReference>
<dbReference type="InterPro" id="IPR020847">
    <property type="entry name" value="AP_endonuclease_F1_BS"/>
</dbReference>
<dbReference type="InterPro" id="IPR020848">
    <property type="entry name" value="AP_endonuclease_F1_CS"/>
</dbReference>
<dbReference type="InterPro" id="IPR036691">
    <property type="entry name" value="Endo/exonu/phosph_ase_sf"/>
</dbReference>
<dbReference type="InterPro" id="IPR005135">
    <property type="entry name" value="Endo/exonuclease/phosphatase"/>
</dbReference>
<dbReference type="NCBIfam" id="TIGR00195">
    <property type="entry name" value="exoDNase_III"/>
    <property type="match status" value="1"/>
</dbReference>
<dbReference type="NCBIfam" id="TIGR00633">
    <property type="entry name" value="xth"/>
    <property type="match status" value="1"/>
</dbReference>
<dbReference type="PANTHER" id="PTHR22748">
    <property type="entry name" value="AP ENDONUCLEASE"/>
    <property type="match status" value="1"/>
</dbReference>
<dbReference type="PANTHER" id="PTHR22748:SF6">
    <property type="entry name" value="DNA-(APURINIC OR APYRIMIDINIC SITE) ENDONUCLEASE"/>
    <property type="match status" value="1"/>
</dbReference>
<dbReference type="Pfam" id="PF03372">
    <property type="entry name" value="Exo_endo_phos"/>
    <property type="match status" value="1"/>
</dbReference>
<dbReference type="SUPFAM" id="SSF56219">
    <property type="entry name" value="DNase I-like"/>
    <property type="match status" value="1"/>
</dbReference>
<dbReference type="PROSITE" id="PS00726">
    <property type="entry name" value="AP_NUCLEASE_F1_1"/>
    <property type="match status" value="1"/>
</dbReference>
<dbReference type="PROSITE" id="PS00727">
    <property type="entry name" value="AP_NUCLEASE_F1_2"/>
    <property type="match status" value="1"/>
</dbReference>
<dbReference type="PROSITE" id="PS00728">
    <property type="entry name" value="AP_NUCLEASE_F1_3"/>
    <property type="match status" value="1"/>
</dbReference>
<dbReference type="PROSITE" id="PS51435">
    <property type="entry name" value="AP_NUCLEASE_F1_4"/>
    <property type="match status" value="1"/>
</dbReference>
<reference key="1">
    <citation type="journal article" date="1994" name="DNA Res.">
        <title>Systematic sequencing of the 180 kilobase region of the Bacillus subtilis chromosome containing the replication origin.</title>
        <authorList>
            <person name="Ogasawara N."/>
            <person name="Nakai S."/>
            <person name="Yoshikawa H."/>
        </authorList>
    </citation>
    <scope>NUCLEOTIDE SEQUENCE [GENOMIC DNA]</scope>
    <source>
        <strain>168</strain>
    </source>
</reference>
<reference key="2">
    <citation type="journal article" date="1997" name="Nature">
        <title>The complete genome sequence of the Gram-positive bacterium Bacillus subtilis.</title>
        <authorList>
            <person name="Kunst F."/>
            <person name="Ogasawara N."/>
            <person name="Moszer I."/>
            <person name="Albertini A.M."/>
            <person name="Alloni G."/>
            <person name="Azevedo V."/>
            <person name="Bertero M.G."/>
            <person name="Bessieres P."/>
            <person name="Bolotin A."/>
            <person name="Borchert S."/>
            <person name="Borriss R."/>
            <person name="Boursier L."/>
            <person name="Brans A."/>
            <person name="Braun M."/>
            <person name="Brignell S.C."/>
            <person name="Bron S."/>
            <person name="Brouillet S."/>
            <person name="Bruschi C.V."/>
            <person name="Caldwell B."/>
            <person name="Capuano V."/>
            <person name="Carter N.M."/>
            <person name="Choi S.-K."/>
            <person name="Codani J.-J."/>
            <person name="Connerton I.F."/>
            <person name="Cummings N.J."/>
            <person name="Daniel R.A."/>
            <person name="Denizot F."/>
            <person name="Devine K.M."/>
            <person name="Duesterhoeft A."/>
            <person name="Ehrlich S.D."/>
            <person name="Emmerson P.T."/>
            <person name="Entian K.-D."/>
            <person name="Errington J."/>
            <person name="Fabret C."/>
            <person name="Ferrari E."/>
            <person name="Foulger D."/>
            <person name="Fritz C."/>
            <person name="Fujita M."/>
            <person name="Fujita Y."/>
            <person name="Fuma S."/>
            <person name="Galizzi A."/>
            <person name="Galleron N."/>
            <person name="Ghim S.-Y."/>
            <person name="Glaser P."/>
            <person name="Goffeau A."/>
            <person name="Golightly E.J."/>
            <person name="Grandi G."/>
            <person name="Guiseppi G."/>
            <person name="Guy B.J."/>
            <person name="Haga K."/>
            <person name="Haiech J."/>
            <person name="Harwood C.R."/>
            <person name="Henaut A."/>
            <person name="Hilbert H."/>
            <person name="Holsappel S."/>
            <person name="Hosono S."/>
            <person name="Hullo M.-F."/>
            <person name="Itaya M."/>
            <person name="Jones L.-M."/>
            <person name="Joris B."/>
            <person name="Karamata D."/>
            <person name="Kasahara Y."/>
            <person name="Klaerr-Blanchard M."/>
            <person name="Klein C."/>
            <person name="Kobayashi Y."/>
            <person name="Koetter P."/>
            <person name="Koningstein G."/>
            <person name="Krogh S."/>
            <person name="Kumano M."/>
            <person name="Kurita K."/>
            <person name="Lapidus A."/>
            <person name="Lardinois S."/>
            <person name="Lauber J."/>
            <person name="Lazarevic V."/>
            <person name="Lee S.-M."/>
            <person name="Levine A."/>
            <person name="Liu H."/>
            <person name="Masuda S."/>
            <person name="Mauel C."/>
            <person name="Medigue C."/>
            <person name="Medina N."/>
            <person name="Mellado R.P."/>
            <person name="Mizuno M."/>
            <person name="Moestl D."/>
            <person name="Nakai S."/>
            <person name="Noback M."/>
            <person name="Noone D."/>
            <person name="O'Reilly M."/>
            <person name="Ogawa K."/>
            <person name="Ogiwara A."/>
            <person name="Oudega B."/>
            <person name="Park S.-H."/>
            <person name="Parro V."/>
            <person name="Pohl T.M."/>
            <person name="Portetelle D."/>
            <person name="Porwollik S."/>
            <person name="Prescott A.M."/>
            <person name="Presecan E."/>
            <person name="Pujic P."/>
            <person name="Purnelle B."/>
            <person name="Rapoport G."/>
            <person name="Rey M."/>
            <person name="Reynolds S."/>
            <person name="Rieger M."/>
            <person name="Rivolta C."/>
            <person name="Rocha E."/>
            <person name="Roche B."/>
            <person name="Rose M."/>
            <person name="Sadaie Y."/>
            <person name="Sato T."/>
            <person name="Scanlan E."/>
            <person name="Schleich S."/>
            <person name="Schroeter R."/>
            <person name="Scoffone F."/>
            <person name="Sekiguchi J."/>
            <person name="Sekowska A."/>
            <person name="Seror S.J."/>
            <person name="Serror P."/>
            <person name="Shin B.-S."/>
            <person name="Soldo B."/>
            <person name="Sorokin A."/>
            <person name="Tacconi E."/>
            <person name="Takagi T."/>
            <person name="Takahashi H."/>
            <person name="Takemaru K."/>
            <person name="Takeuchi M."/>
            <person name="Tamakoshi A."/>
            <person name="Tanaka T."/>
            <person name="Terpstra P."/>
            <person name="Tognoni A."/>
            <person name="Tosato V."/>
            <person name="Uchiyama S."/>
            <person name="Vandenbol M."/>
            <person name="Vannier F."/>
            <person name="Vassarotti A."/>
            <person name="Viari A."/>
            <person name="Wambutt R."/>
            <person name="Wedler E."/>
            <person name="Wedler H."/>
            <person name="Weitzenegger T."/>
            <person name="Winters P."/>
            <person name="Wipat A."/>
            <person name="Yamamoto H."/>
            <person name="Yamane K."/>
            <person name="Yasumoto K."/>
            <person name="Yata K."/>
            <person name="Yoshida K."/>
            <person name="Yoshikawa H.-F."/>
            <person name="Zumstein E."/>
            <person name="Yoshikawa H."/>
            <person name="Danchin A."/>
        </authorList>
    </citation>
    <scope>NUCLEOTIDE SEQUENCE [LARGE SCALE GENOMIC DNA]</scope>
    <source>
        <strain>168</strain>
    </source>
</reference>
<reference key="3">
    <citation type="journal article" date="1999" name="Biosci. Biotechnol. Biochem.">
        <title>Characterization of Bacillus subtilis ExoA protein: a multifunctional DNA-repair enzyme similar to the Escherichia coli exonuclease III.</title>
        <authorList>
            <person name="Shida T."/>
            <person name="Ogawa T."/>
            <person name="Ogasawara N."/>
            <person name="Sekiguchi J."/>
        </authorList>
    </citation>
    <scope>CHARACTERIZATION</scope>
</reference>
<proteinExistence type="evidence at protein level"/>
<organism>
    <name type="scientific">Bacillus subtilis (strain 168)</name>
    <dbReference type="NCBI Taxonomy" id="224308"/>
    <lineage>
        <taxon>Bacteria</taxon>
        <taxon>Bacillati</taxon>
        <taxon>Bacillota</taxon>
        <taxon>Bacilli</taxon>
        <taxon>Bacillales</taxon>
        <taxon>Bacillaceae</taxon>
        <taxon>Bacillus</taxon>
    </lineage>
</organism>
<name>EXOA_BACSU</name>
<protein>
    <recommendedName>
        <fullName>Exodeoxyribonuclease</fullName>
        <ecNumber>3.1.11.2</ecNumber>
    </recommendedName>
</protein>
<accession>P37454</accession>
<comment type="catalytic activity">
    <reaction>
        <text>Exonucleolytic cleavage in the 3'- to 5'-direction to yield nucleoside 5'-phosphates.</text>
        <dbReference type="EC" id="3.1.11.2"/>
    </reaction>
</comment>
<comment type="cofactor">
    <cofactor evidence="1">
        <name>Mg(2+)</name>
        <dbReference type="ChEBI" id="CHEBI:18420"/>
    </cofactor>
    <cofactor evidence="1">
        <name>Mn(2+)</name>
        <dbReference type="ChEBI" id="CHEBI:29035"/>
    </cofactor>
    <text evidence="1">Probably binds two magnesium or manganese ions per subunit.</text>
</comment>
<comment type="subcellular location">
    <subcellularLocation>
        <location>Cytoplasm</location>
    </subcellularLocation>
</comment>
<comment type="similarity">
    <text evidence="2">Belongs to the DNA repair enzymes AP/ExoA family.</text>
</comment>
<evidence type="ECO:0000250" key="1"/>
<evidence type="ECO:0000305" key="2"/>
<evidence type="ECO:0007829" key="3">
    <source>
        <dbReference type="PDB" id="5CFE"/>
    </source>
</evidence>
<keyword id="KW-0002">3D-structure</keyword>
<keyword id="KW-0963">Cytoplasm</keyword>
<keyword id="KW-0269">Exonuclease</keyword>
<keyword id="KW-0378">Hydrolase</keyword>
<keyword id="KW-0460">Magnesium</keyword>
<keyword id="KW-0479">Metal-binding</keyword>
<keyword id="KW-0540">Nuclease</keyword>
<keyword id="KW-1185">Reference proteome</keyword>
<sequence length="252" mass="29252">MKLISWNVNGLRAVMRKMDFLSYLKEEDADIICLQETKIQDGQVDLQPEDYHVYWNYAVKKGYSGTAVFSKQEPLQVIYGIGVEEHDQEGRVITLEFENVFVMTVYTPNSRRGLERIDYRMQWEEALLSYILELDQKKPVILCGDLNVAHQEIDLKNPKANRNNAGFSDQEREAFTRFLEAGFVDSFRHVYPDLEGAYSWWSYRAGARDRNIGWRIDYFVVSESLKEQIEDASISADVMGSDHCPVELIINI</sequence>
<gene>
    <name type="primary">exoA</name>
    <name type="ordered locus">BSU40880</name>
</gene>